<accession>A6VZ92</accession>
<organism>
    <name type="scientific">Marinomonas sp. (strain MWYL1)</name>
    <dbReference type="NCBI Taxonomy" id="400668"/>
    <lineage>
        <taxon>Bacteria</taxon>
        <taxon>Pseudomonadati</taxon>
        <taxon>Pseudomonadota</taxon>
        <taxon>Gammaproteobacteria</taxon>
        <taxon>Oceanospirillales</taxon>
        <taxon>Oceanospirillaceae</taxon>
        <taxon>Marinomonas</taxon>
    </lineage>
</organism>
<sequence length="359" mass="39233">MSRVYNFCSGPAALPEAVLKKAQAELLDWHGAGVSVMEMSHRSSEFMSILASAKARLSRLMNISDDYEILFVQGGASTLFSQIPANLANGFESACFLDTGAWSSKAIKEAKKYTKVNVVGSSKAQNYTTVPDFSTLELDESAAYLHICPNETIGGLEFADLPETNLPIVADLSSTILSRKVDVSKYGVIYAGAQKNVGPAGVVICIIRKDLLARSSDDLPAIWNFAHLAENDSMINTPPTFAIYLADLVFEWLEAQGGVEAIEQINIRKAQALYDFIDSSNFYSNPVDPVYRSRMNVPFILADESLEALFLQESEAAGLRTLAGHRSVGGMRASIYNAMPMEGIEALIEFMRGFEERHG</sequence>
<gene>
    <name evidence="1" type="primary">serC</name>
    <name type="ordered locus">Mmwyl1_2859</name>
</gene>
<comment type="function">
    <text evidence="1">Catalyzes the reversible conversion of 3-phosphohydroxypyruvate to phosphoserine and of 3-hydroxy-2-oxo-4-phosphonooxybutanoate to phosphohydroxythreonine.</text>
</comment>
<comment type="catalytic activity">
    <reaction evidence="1">
        <text>O-phospho-L-serine + 2-oxoglutarate = 3-phosphooxypyruvate + L-glutamate</text>
        <dbReference type="Rhea" id="RHEA:14329"/>
        <dbReference type="ChEBI" id="CHEBI:16810"/>
        <dbReference type="ChEBI" id="CHEBI:18110"/>
        <dbReference type="ChEBI" id="CHEBI:29985"/>
        <dbReference type="ChEBI" id="CHEBI:57524"/>
        <dbReference type="EC" id="2.6.1.52"/>
    </reaction>
</comment>
<comment type="catalytic activity">
    <reaction evidence="1">
        <text>4-(phosphooxy)-L-threonine + 2-oxoglutarate = (R)-3-hydroxy-2-oxo-4-phosphooxybutanoate + L-glutamate</text>
        <dbReference type="Rhea" id="RHEA:16573"/>
        <dbReference type="ChEBI" id="CHEBI:16810"/>
        <dbReference type="ChEBI" id="CHEBI:29985"/>
        <dbReference type="ChEBI" id="CHEBI:58452"/>
        <dbReference type="ChEBI" id="CHEBI:58538"/>
        <dbReference type="EC" id="2.6.1.52"/>
    </reaction>
</comment>
<comment type="cofactor">
    <cofactor evidence="1">
        <name>pyridoxal 5'-phosphate</name>
        <dbReference type="ChEBI" id="CHEBI:597326"/>
    </cofactor>
    <text evidence="1">Binds 1 pyridoxal phosphate per subunit.</text>
</comment>
<comment type="pathway">
    <text evidence="1">Amino-acid biosynthesis; L-serine biosynthesis; L-serine from 3-phospho-D-glycerate: step 2/3.</text>
</comment>
<comment type="pathway">
    <text evidence="1">Cofactor biosynthesis; pyridoxine 5'-phosphate biosynthesis; pyridoxine 5'-phosphate from D-erythrose 4-phosphate: step 3/5.</text>
</comment>
<comment type="subunit">
    <text evidence="1">Homodimer.</text>
</comment>
<comment type="subcellular location">
    <subcellularLocation>
        <location evidence="1">Cytoplasm</location>
    </subcellularLocation>
</comment>
<comment type="similarity">
    <text evidence="1">Belongs to the class-V pyridoxal-phosphate-dependent aminotransferase family. SerC subfamily.</text>
</comment>
<proteinExistence type="inferred from homology"/>
<name>SERC_MARMS</name>
<dbReference type="EC" id="2.6.1.52" evidence="1"/>
<dbReference type="EMBL" id="CP000749">
    <property type="protein sequence ID" value="ABR71771.1"/>
    <property type="molecule type" value="Genomic_DNA"/>
</dbReference>
<dbReference type="SMR" id="A6VZ92"/>
<dbReference type="STRING" id="400668.Mmwyl1_2859"/>
<dbReference type="KEGG" id="mmw:Mmwyl1_2859"/>
<dbReference type="eggNOG" id="COG1932">
    <property type="taxonomic scope" value="Bacteria"/>
</dbReference>
<dbReference type="HOGENOM" id="CLU_034866_0_2_6"/>
<dbReference type="OrthoDB" id="9809412at2"/>
<dbReference type="UniPathway" id="UPA00135">
    <property type="reaction ID" value="UER00197"/>
</dbReference>
<dbReference type="UniPathway" id="UPA00244">
    <property type="reaction ID" value="UER00311"/>
</dbReference>
<dbReference type="GO" id="GO:0005737">
    <property type="term" value="C:cytoplasm"/>
    <property type="evidence" value="ECO:0007669"/>
    <property type="project" value="UniProtKB-SubCell"/>
</dbReference>
<dbReference type="GO" id="GO:0004648">
    <property type="term" value="F:O-phospho-L-serine:2-oxoglutarate aminotransferase activity"/>
    <property type="evidence" value="ECO:0007669"/>
    <property type="project" value="UniProtKB-UniRule"/>
</dbReference>
<dbReference type="GO" id="GO:0030170">
    <property type="term" value="F:pyridoxal phosphate binding"/>
    <property type="evidence" value="ECO:0007669"/>
    <property type="project" value="UniProtKB-UniRule"/>
</dbReference>
<dbReference type="GO" id="GO:0006564">
    <property type="term" value="P:L-serine biosynthetic process"/>
    <property type="evidence" value="ECO:0007669"/>
    <property type="project" value="UniProtKB-UniRule"/>
</dbReference>
<dbReference type="GO" id="GO:0008615">
    <property type="term" value="P:pyridoxine biosynthetic process"/>
    <property type="evidence" value="ECO:0007669"/>
    <property type="project" value="UniProtKB-UniRule"/>
</dbReference>
<dbReference type="CDD" id="cd00611">
    <property type="entry name" value="PSAT_like"/>
    <property type="match status" value="1"/>
</dbReference>
<dbReference type="FunFam" id="3.40.640.10:FF:000010">
    <property type="entry name" value="Phosphoserine aminotransferase"/>
    <property type="match status" value="1"/>
</dbReference>
<dbReference type="FunFam" id="3.90.1150.10:FF:000006">
    <property type="entry name" value="Phosphoserine aminotransferase"/>
    <property type="match status" value="1"/>
</dbReference>
<dbReference type="Gene3D" id="3.90.1150.10">
    <property type="entry name" value="Aspartate Aminotransferase, domain 1"/>
    <property type="match status" value="1"/>
</dbReference>
<dbReference type="Gene3D" id="3.40.640.10">
    <property type="entry name" value="Type I PLP-dependent aspartate aminotransferase-like (Major domain)"/>
    <property type="match status" value="1"/>
</dbReference>
<dbReference type="HAMAP" id="MF_00160">
    <property type="entry name" value="SerC_aminotrans_5"/>
    <property type="match status" value="1"/>
</dbReference>
<dbReference type="InterPro" id="IPR000192">
    <property type="entry name" value="Aminotrans_V_dom"/>
</dbReference>
<dbReference type="InterPro" id="IPR022278">
    <property type="entry name" value="Pser_aminoTfrase"/>
</dbReference>
<dbReference type="InterPro" id="IPR015424">
    <property type="entry name" value="PyrdxlP-dep_Trfase"/>
</dbReference>
<dbReference type="InterPro" id="IPR015421">
    <property type="entry name" value="PyrdxlP-dep_Trfase_major"/>
</dbReference>
<dbReference type="InterPro" id="IPR015422">
    <property type="entry name" value="PyrdxlP-dep_Trfase_small"/>
</dbReference>
<dbReference type="NCBIfam" id="NF003764">
    <property type="entry name" value="PRK05355.1"/>
    <property type="match status" value="1"/>
</dbReference>
<dbReference type="NCBIfam" id="TIGR01364">
    <property type="entry name" value="serC_1"/>
    <property type="match status" value="1"/>
</dbReference>
<dbReference type="PANTHER" id="PTHR43247">
    <property type="entry name" value="PHOSPHOSERINE AMINOTRANSFERASE"/>
    <property type="match status" value="1"/>
</dbReference>
<dbReference type="PANTHER" id="PTHR43247:SF1">
    <property type="entry name" value="PHOSPHOSERINE AMINOTRANSFERASE"/>
    <property type="match status" value="1"/>
</dbReference>
<dbReference type="Pfam" id="PF00266">
    <property type="entry name" value="Aminotran_5"/>
    <property type="match status" value="1"/>
</dbReference>
<dbReference type="PIRSF" id="PIRSF000525">
    <property type="entry name" value="SerC"/>
    <property type="match status" value="1"/>
</dbReference>
<dbReference type="SUPFAM" id="SSF53383">
    <property type="entry name" value="PLP-dependent transferases"/>
    <property type="match status" value="1"/>
</dbReference>
<reference key="1">
    <citation type="submission" date="2007-06" db="EMBL/GenBank/DDBJ databases">
        <title>Complete sequence of Marinomonas sp. MWYL1.</title>
        <authorList>
            <consortium name="US DOE Joint Genome Institute"/>
            <person name="Copeland A."/>
            <person name="Lucas S."/>
            <person name="Lapidus A."/>
            <person name="Barry K."/>
            <person name="Glavina del Rio T."/>
            <person name="Dalin E."/>
            <person name="Tice H."/>
            <person name="Pitluck S."/>
            <person name="Kiss H."/>
            <person name="Brettin T."/>
            <person name="Bruce D."/>
            <person name="Detter J.C."/>
            <person name="Han C."/>
            <person name="Schmutz J."/>
            <person name="Larimer F."/>
            <person name="Land M."/>
            <person name="Hauser L."/>
            <person name="Kyrpides N."/>
            <person name="Kim E."/>
            <person name="Johnston A.W.B."/>
            <person name="Todd J.D."/>
            <person name="Rogers R."/>
            <person name="Wexler M."/>
            <person name="Bond P.L."/>
            <person name="Li Y."/>
            <person name="Richardson P."/>
        </authorList>
    </citation>
    <scope>NUCLEOTIDE SEQUENCE [LARGE SCALE GENOMIC DNA]</scope>
    <source>
        <strain>MWYL1</strain>
    </source>
</reference>
<evidence type="ECO:0000255" key="1">
    <source>
        <dbReference type="HAMAP-Rule" id="MF_00160"/>
    </source>
</evidence>
<feature type="chain" id="PRO_1000203545" description="Phosphoserine aminotransferase">
    <location>
        <begin position="1"/>
        <end position="359"/>
    </location>
</feature>
<feature type="binding site" evidence="1">
    <location>
        <position position="9"/>
    </location>
    <ligand>
        <name>L-glutamate</name>
        <dbReference type="ChEBI" id="CHEBI:29985"/>
    </ligand>
</feature>
<feature type="binding site" evidence="1">
    <location>
        <position position="42"/>
    </location>
    <ligand>
        <name>L-glutamate</name>
        <dbReference type="ChEBI" id="CHEBI:29985"/>
    </ligand>
</feature>
<feature type="binding site" evidence="1">
    <location>
        <begin position="76"/>
        <end position="77"/>
    </location>
    <ligand>
        <name>pyridoxal 5'-phosphate</name>
        <dbReference type="ChEBI" id="CHEBI:597326"/>
    </ligand>
</feature>
<feature type="binding site" evidence="1">
    <location>
        <position position="102"/>
    </location>
    <ligand>
        <name>pyridoxal 5'-phosphate</name>
        <dbReference type="ChEBI" id="CHEBI:597326"/>
    </ligand>
</feature>
<feature type="binding site" evidence="1">
    <location>
        <position position="152"/>
    </location>
    <ligand>
        <name>pyridoxal 5'-phosphate</name>
        <dbReference type="ChEBI" id="CHEBI:597326"/>
    </ligand>
</feature>
<feature type="binding site" evidence="1">
    <location>
        <position position="171"/>
    </location>
    <ligand>
        <name>pyridoxal 5'-phosphate</name>
        <dbReference type="ChEBI" id="CHEBI:597326"/>
    </ligand>
</feature>
<feature type="binding site" evidence="1">
    <location>
        <position position="194"/>
    </location>
    <ligand>
        <name>pyridoxal 5'-phosphate</name>
        <dbReference type="ChEBI" id="CHEBI:597326"/>
    </ligand>
</feature>
<feature type="binding site" evidence="1">
    <location>
        <begin position="236"/>
        <end position="237"/>
    </location>
    <ligand>
        <name>pyridoxal 5'-phosphate</name>
        <dbReference type="ChEBI" id="CHEBI:597326"/>
    </ligand>
</feature>
<feature type="modified residue" description="N6-(pyridoxal phosphate)lysine" evidence="1">
    <location>
        <position position="195"/>
    </location>
</feature>
<keyword id="KW-0028">Amino-acid biosynthesis</keyword>
<keyword id="KW-0032">Aminotransferase</keyword>
<keyword id="KW-0963">Cytoplasm</keyword>
<keyword id="KW-0663">Pyridoxal phosphate</keyword>
<keyword id="KW-0664">Pyridoxine biosynthesis</keyword>
<keyword id="KW-0718">Serine biosynthesis</keyword>
<keyword id="KW-0808">Transferase</keyword>
<protein>
    <recommendedName>
        <fullName evidence="1">Phosphoserine aminotransferase</fullName>
        <ecNumber evidence="1">2.6.1.52</ecNumber>
    </recommendedName>
    <alternativeName>
        <fullName evidence="1">Phosphohydroxythreonine aminotransferase</fullName>
        <shortName evidence="1">PSAT</shortName>
    </alternativeName>
</protein>